<keyword id="KW-0058">Aromatic hydrocarbons catabolism</keyword>
<keyword id="KW-0456">Lyase</keyword>
<keyword id="KW-0464">Manganese</keyword>
<keyword id="KW-0479">Metal-binding</keyword>
<keyword id="KW-0614">Plasmid</keyword>
<protein>
    <recommendedName>
        <fullName evidence="1">4-hydroxy-2-oxovalerate aldolase</fullName>
        <shortName evidence="1">HOA</shortName>
        <ecNumber evidence="1">4.1.3.39</ecNumber>
    </recommendedName>
    <alternativeName>
        <fullName evidence="1">4-hydroxy-2-keto-pentanoic acid aldolase</fullName>
    </alternativeName>
    <alternativeName>
        <fullName evidence="1">4-hydroxy-2-oxopentanoate aldolase</fullName>
    </alternativeName>
</protein>
<reference key="1">
    <citation type="journal article" date="1999" name="J. Bacteriol.">
        <title>Complete sequence of a 184-kilobase catabolic plasmid from Sphingomonas aromaticivorans F199.</title>
        <authorList>
            <person name="Romine M.F."/>
            <person name="Stillwell L.C."/>
            <person name="Wong K.-K."/>
            <person name="Thurston S.J."/>
            <person name="Sisk E.C."/>
            <person name="Sensen C."/>
            <person name="Gaasterland T."/>
            <person name="Fredrickson J.K."/>
            <person name="Saffer J.D."/>
        </authorList>
    </citation>
    <scope>NUCLEOTIDE SEQUENCE [GENOMIC DNA]</scope>
    <source>
        <strain>ATCC 700278 / DSM 12444 / F199</strain>
    </source>
</reference>
<dbReference type="EC" id="4.1.3.39" evidence="1"/>
<dbReference type="EMBL" id="AF079317">
    <property type="protein sequence ID" value="AAD03993.1"/>
    <property type="molecule type" value="Genomic_DNA"/>
</dbReference>
<dbReference type="PIR" id="T31269">
    <property type="entry name" value="T31269"/>
</dbReference>
<dbReference type="RefSeq" id="NP_049197.1">
    <property type="nucleotide sequence ID" value="NC_002033.1"/>
</dbReference>
<dbReference type="RefSeq" id="WP_010891015.1">
    <property type="nucleotide sequence ID" value="NC_002033.1"/>
</dbReference>
<dbReference type="SMR" id="O85977"/>
<dbReference type="OMA" id="QGWKHNS"/>
<dbReference type="OrthoDB" id="9803573at2"/>
<dbReference type="GO" id="GO:0003852">
    <property type="term" value="F:2-isopropylmalate synthase activity"/>
    <property type="evidence" value="ECO:0007669"/>
    <property type="project" value="TreeGrafter"/>
</dbReference>
<dbReference type="GO" id="GO:0008701">
    <property type="term" value="F:4-hydroxy-2-oxovalerate aldolase activity"/>
    <property type="evidence" value="ECO:0007669"/>
    <property type="project" value="UniProtKB-UniRule"/>
</dbReference>
<dbReference type="GO" id="GO:0030145">
    <property type="term" value="F:manganese ion binding"/>
    <property type="evidence" value="ECO:0007669"/>
    <property type="project" value="UniProtKB-UniRule"/>
</dbReference>
<dbReference type="GO" id="GO:0009056">
    <property type="term" value="P:catabolic process"/>
    <property type="evidence" value="ECO:0007669"/>
    <property type="project" value="UniProtKB-KW"/>
</dbReference>
<dbReference type="GO" id="GO:0009098">
    <property type="term" value="P:L-leucine biosynthetic process"/>
    <property type="evidence" value="ECO:0007669"/>
    <property type="project" value="TreeGrafter"/>
</dbReference>
<dbReference type="CDD" id="cd07943">
    <property type="entry name" value="DRE_TIM_HOA"/>
    <property type="match status" value="1"/>
</dbReference>
<dbReference type="FunFam" id="1.10.8.60:FF:000042">
    <property type="entry name" value="4-hydroxy-2-oxovalerate aldolase"/>
    <property type="match status" value="1"/>
</dbReference>
<dbReference type="Gene3D" id="1.10.8.60">
    <property type="match status" value="1"/>
</dbReference>
<dbReference type="Gene3D" id="3.20.20.70">
    <property type="entry name" value="Aldolase class I"/>
    <property type="match status" value="1"/>
</dbReference>
<dbReference type="HAMAP" id="MF_01656">
    <property type="entry name" value="HOA"/>
    <property type="match status" value="1"/>
</dbReference>
<dbReference type="InterPro" id="IPR050073">
    <property type="entry name" value="2-IPM_HCS-like"/>
</dbReference>
<dbReference type="InterPro" id="IPR017629">
    <property type="entry name" value="4OH_2_O-val_aldolase"/>
</dbReference>
<dbReference type="InterPro" id="IPR013785">
    <property type="entry name" value="Aldolase_TIM"/>
</dbReference>
<dbReference type="InterPro" id="IPR012425">
    <property type="entry name" value="DmpG_comm"/>
</dbReference>
<dbReference type="InterPro" id="IPR035685">
    <property type="entry name" value="DRE_TIM_HOA"/>
</dbReference>
<dbReference type="InterPro" id="IPR000891">
    <property type="entry name" value="PYR_CT"/>
</dbReference>
<dbReference type="NCBIfam" id="TIGR03217">
    <property type="entry name" value="4OH_2_O_val_ald"/>
    <property type="match status" value="1"/>
</dbReference>
<dbReference type="NCBIfam" id="NF006049">
    <property type="entry name" value="PRK08195.1"/>
    <property type="match status" value="1"/>
</dbReference>
<dbReference type="PANTHER" id="PTHR10277:SF9">
    <property type="entry name" value="2-ISOPROPYLMALATE SYNTHASE 1, CHLOROPLASTIC-RELATED"/>
    <property type="match status" value="1"/>
</dbReference>
<dbReference type="PANTHER" id="PTHR10277">
    <property type="entry name" value="HOMOCITRATE SYNTHASE-RELATED"/>
    <property type="match status" value="1"/>
</dbReference>
<dbReference type="Pfam" id="PF07836">
    <property type="entry name" value="DmpG_comm"/>
    <property type="match status" value="1"/>
</dbReference>
<dbReference type="Pfam" id="PF00682">
    <property type="entry name" value="HMGL-like"/>
    <property type="match status" value="1"/>
</dbReference>
<dbReference type="SUPFAM" id="SSF51569">
    <property type="entry name" value="Aldolase"/>
    <property type="match status" value="1"/>
</dbReference>
<dbReference type="SUPFAM" id="SSF89000">
    <property type="entry name" value="post-HMGL domain-like"/>
    <property type="match status" value="1"/>
</dbReference>
<dbReference type="PROSITE" id="PS50991">
    <property type="entry name" value="PYR_CT"/>
    <property type="match status" value="1"/>
</dbReference>
<organism>
    <name type="scientific">Novosphingobium aromaticivorans</name>
    <name type="common">Sphingomonas aromaticivorans</name>
    <dbReference type="NCBI Taxonomy" id="48935"/>
    <lineage>
        <taxon>Bacteria</taxon>
        <taxon>Pseudomonadati</taxon>
        <taxon>Pseudomonadota</taxon>
        <taxon>Alphaproteobacteria</taxon>
        <taxon>Sphingomonadales</taxon>
        <taxon>Sphingomonadaceae</taxon>
        <taxon>Novosphingobium</taxon>
    </lineage>
</organism>
<feature type="chain" id="PRO_0000387918" description="4-hydroxy-2-oxovalerate aldolase">
    <location>
        <begin position="1"/>
        <end position="343"/>
    </location>
</feature>
<feature type="domain" description="Pyruvate carboxyltransferase" evidence="1">
    <location>
        <begin position="10"/>
        <end position="262"/>
    </location>
</feature>
<feature type="active site" description="Proton acceptor" evidence="1">
    <location>
        <position position="22"/>
    </location>
</feature>
<feature type="binding site" evidence="1">
    <location>
        <begin position="18"/>
        <end position="19"/>
    </location>
    <ligand>
        <name>substrate</name>
    </ligand>
</feature>
<feature type="binding site" evidence="1">
    <location>
        <position position="19"/>
    </location>
    <ligand>
        <name>Mn(2+)</name>
        <dbReference type="ChEBI" id="CHEBI:29035"/>
    </ligand>
</feature>
<feature type="binding site" evidence="1">
    <location>
        <position position="172"/>
    </location>
    <ligand>
        <name>substrate</name>
    </ligand>
</feature>
<feature type="binding site" evidence="1">
    <location>
        <position position="201"/>
    </location>
    <ligand>
        <name>Mn(2+)</name>
        <dbReference type="ChEBI" id="CHEBI:29035"/>
    </ligand>
</feature>
<feature type="binding site" evidence="1">
    <location>
        <position position="201"/>
    </location>
    <ligand>
        <name>substrate</name>
    </ligand>
</feature>
<feature type="binding site" evidence="1">
    <location>
        <position position="203"/>
    </location>
    <ligand>
        <name>Mn(2+)</name>
        <dbReference type="ChEBI" id="CHEBI:29035"/>
    </ligand>
</feature>
<feature type="binding site" evidence="1">
    <location>
        <position position="292"/>
    </location>
    <ligand>
        <name>substrate</name>
    </ligand>
</feature>
<feature type="site" description="Transition state stabilizer" evidence="1">
    <location>
        <position position="18"/>
    </location>
</feature>
<sequence length="343" mass="36859">MTFDPTSDRLYIQDVTLRDGMHAILHMYGTDSVRTIAKALDEAGVDAIEVSHGDGLNGSTFNYGFGAHTDWDWIEAAADVIKNAVLTTLLVPGIGTAEELKRAYSMGVRSVRVATHCTEADVGKQHIGIARDLGMDVSGFLMMSHMIEPEALAQQALLMESYGAHCVYVTDSGGALDMDGVIARLQAYDRVLKPETQRGIHAHHNLSLGVANSIVAAQAGAVRIDASLAGMGAGAGNAPLEVFIAAANRKGWKHGCDVMALMDAADDIIRPLQDRPVRVDRETLSLGYAGVYSSFLRHAEKAAEQYGIDTREILVELGNRRMVGGQEDMIIDVALDLIKAKAN</sequence>
<name>HOA_NOVAR</name>
<evidence type="ECO:0000255" key="1">
    <source>
        <dbReference type="HAMAP-Rule" id="MF_01656"/>
    </source>
</evidence>
<geneLocation type="plasmid">
    <name>pNL1</name>
</geneLocation>
<comment type="catalytic activity">
    <reaction evidence="1">
        <text>(S)-4-hydroxy-2-oxopentanoate = acetaldehyde + pyruvate</text>
        <dbReference type="Rhea" id="RHEA:22624"/>
        <dbReference type="ChEBI" id="CHEBI:15343"/>
        <dbReference type="ChEBI" id="CHEBI:15361"/>
        <dbReference type="ChEBI" id="CHEBI:73143"/>
        <dbReference type="EC" id="4.1.3.39"/>
    </reaction>
</comment>
<comment type="similarity">
    <text evidence="1">Belongs to the 4-hydroxy-2-oxovalerate aldolase family.</text>
</comment>
<proteinExistence type="inferred from homology"/>
<gene>
    <name type="primary">xylK</name>
</gene>
<accession>O85977</accession>